<reference key="1">
    <citation type="journal article" date="2009" name="Genome Biol.">
        <title>Genomic and genetic analyses of diversity and plant interactions of Pseudomonas fluorescens.</title>
        <authorList>
            <person name="Silby M.W."/>
            <person name="Cerdeno-Tarraga A.M."/>
            <person name="Vernikos G.S."/>
            <person name="Giddens S.R."/>
            <person name="Jackson R.W."/>
            <person name="Preston G.M."/>
            <person name="Zhang X.-X."/>
            <person name="Moon C.D."/>
            <person name="Gehrig S.M."/>
            <person name="Godfrey S.A.C."/>
            <person name="Knight C.G."/>
            <person name="Malone J.G."/>
            <person name="Robinson Z."/>
            <person name="Spiers A.J."/>
            <person name="Harris S."/>
            <person name="Challis G.L."/>
            <person name="Yaxley A.M."/>
            <person name="Harris D."/>
            <person name="Seeger K."/>
            <person name="Murphy L."/>
            <person name="Rutter S."/>
            <person name="Squares R."/>
            <person name="Quail M.A."/>
            <person name="Saunders E."/>
            <person name="Mavromatis K."/>
            <person name="Brettin T.S."/>
            <person name="Bentley S.D."/>
            <person name="Hothersall J."/>
            <person name="Stephens E."/>
            <person name="Thomas C.M."/>
            <person name="Parkhill J."/>
            <person name="Levy S.B."/>
            <person name="Rainey P.B."/>
            <person name="Thomson N.R."/>
        </authorList>
    </citation>
    <scope>NUCLEOTIDE SEQUENCE [LARGE SCALE GENOMIC DNA]</scope>
    <source>
        <strain>SBW25</strain>
    </source>
</reference>
<organism>
    <name type="scientific">Pseudomonas fluorescens (strain SBW25)</name>
    <dbReference type="NCBI Taxonomy" id="216595"/>
    <lineage>
        <taxon>Bacteria</taxon>
        <taxon>Pseudomonadati</taxon>
        <taxon>Pseudomonadota</taxon>
        <taxon>Gammaproteobacteria</taxon>
        <taxon>Pseudomonadales</taxon>
        <taxon>Pseudomonadaceae</taxon>
        <taxon>Pseudomonas</taxon>
    </lineage>
</organism>
<dbReference type="EMBL" id="AM181176">
    <property type="protein sequence ID" value="CAY46680.1"/>
    <property type="molecule type" value="Genomic_DNA"/>
</dbReference>
<dbReference type="RefSeq" id="WP_005784030.1">
    <property type="nucleotide sequence ID" value="NC_012660.1"/>
</dbReference>
<dbReference type="SMR" id="C3KAH5"/>
<dbReference type="STRING" id="294.SRM1_00452"/>
<dbReference type="GeneID" id="93462003"/>
<dbReference type="eggNOG" id="COG0254">
    <property type="taxonomic scope" value="Bacteria"/>
</dbReference>
<dbReference type="HOGENOM" id="CLU_114306_4_0_6"/>
<dbReference type="OrthoDB" id="9803251at2"/>
<dbReference type="GO" id="GO:1990904">
    <property type="term" value="C:ribonucleoprotein complex"/>
    <property type="evidence" value="ECO:0007669"/>
    <property type="project" value="UniProtKB-KW"/>
</dbReference>
<dbReference type="GO" id="GO:0005840">
    <property type="term" value="C:ribosome"/>
    <property type="evidence" value="ECO:0007669"/>
    <property type="project" value="UniProtKB-KW"/>
</dbReference>
<dbReference type="GO" id="GO:0046872">
    <property type="term" value="F:metal ion binding"/>
    <property type="evidence" value="ECO:0007669"/>
    <property type="project" value="UniProtKB-KW"/>
</dbReference>
<dbReference type="GO" id="GO:0019843">
    <property type="term" value="F:rRNA binding"/>
    <property type="evidence" value="ECO:0007669"/>
    <property type="project" value="UniProtKB-KW"/>
</dbReference>
<dbReference type="GO" id="GO:0003735">
    <property type="term" value="F:structural constituent of ribosome"/>
    <property type="evidence" value="ECO:0007669"/>
    <property type="project" value="InterPro"/>
</dbReference>
<dbReference type="GO" id="GO:0006412">
    <property type="term" value="P:translation"/>
    <property type="evidence" value="ECO:0007669"/>
    <property type="project" value="UniProtKB-UniRule"/>
</dbReference>
<dbReference type="Gene3D" id="4.10.830.30">
    <property type="entry name" value="Ribosomal protein L31"/>
    <property type="match status" value="1"/>
</dbReference>
<dbReference type="HAMAP" id="MF_00501">
    <property type="entry name" value="Ribosomal_bL31_1"/>
    <property type="match status" value="1"/>
</dbReference>
<dbReference type="InterPro" id="IPR034704">
    <property type="entry name" value="Ribosomal_bL28/bL31-like_sf"/>
</dbReference>
<dbReference type="InterPro" id="IPR002150">
    <property type="entry name" value="Ribosomal_bL31"/>
</dbReference>
<dbReference type="InterPro" id="IPR027491">
    <property type="entry name" value="Ribosomal_bL31_A"/>
</dbReference>
<dbReference type="InterPro" id="IPR042105">
    <property type="entry name" value="Ribosomal_bL31_sf"/>
</dbReference>
<dbReference type="NCBIfam" id="TIGR00105">
    <property type="entry name" value="L31"/>
    <property type="match status" value="1"/>
</dbReference>
<dbReference type="NCBIfam" id="NF000612">
    <property type="entry name" value="PRK00019.1"/>
    <property type="match status" value="1"/>
</dbReference>
<dbReference type="PANTHER" id="PTHR33280">
    <property type="entry name" value="50S RIBOSOMAL PROTEIN L31, CHLOROPLASTIC"/>
    <property type="match status" value="1"/>
</dbReference>
<dbReference type="PANTHER" id="PTHR33280:SF6">
    <property type="entry name" value="LARGE RIBOSOMAL SUBUNIT PROTEIN BL31A"/>
    <property type="match status" value="1"/>
</dbReference>
<dbReference type="Pfam" id="PF01197">
    <property type="entry name" value="Ribosomal_L31"/>
    <property type="match status" value="1"/>
</dbReference>
<dbReference type="PRINTS" id="PR01249">
    <property type="entry name" value="RIBOSOMALL31"/>
</dbReference>
<dbReference type="SUPFAM" id="SSF143800">
    <property type="entry name" value="L28p-like"/>
    <property type="match status" value="1"/>
</dbReference>
<dbReference type="PROSITE" id="PS01143">
    <property type="entry name" value="RIBOSOMAL_L31"/>
    <property type="match status" value="1"/>
</dbReference>
<proteinExistence type="inferred from homology"/>
<sequence length="77" mass="8457">MKADIHPAYETIEVTCSCGNKFETRSNLCKPLGTDVCNECHPFYTGKQKTLDTGGRVQRFADRFGAFGKKPAATPAE</sequence>
<name>RL31_PSEFS</name>
<comment type="function">
    <text evidence="1">Binds the 23S rRNA.</text>
</comment>
<comment type="cofactor">
    <cofactor evidence="1">
        <name>Zn(2+)</name>
        <dbReference type="ChEBI" id="CHEBI:29105"/>
    </cofactor>
    <text evidence="1">Binds 1 zinc ion per subunit.</text>
</comment>
<comment type="subunit">
    <text evidence="1">Part of the 50S ribosomal subunit.</text>
</comment>
<comment type="similarity">
    <text evidence="1">Belongs to the bacterial ribosomal protein bL31 family. Type A subfamily.</text>
</comment>
<feature type="chain" id="PRO_1000206527" description="Large ribosomal subunit protein bL31">
    <location>
        <begin position="1"/>
        <end position="77"/>
    </location>
</feature>
<feature type="binding site" evidence="1">
    <location>
        <position position="16"/>
    </location>
    <ligand>
        <name>Zn(2+)</name>
        <dbReference type="ChEBI" id="CHEBI:29105"/>
    </ligand>
</feature>
<feature type="binding site" evidence="1">
    <location>
        <position position="18"/>
    </location>
    <ligand>
        <name>Zn(2+)</name>
        <dbReference type="ChEBI" id="CHEBI:29105"/>
    </ligand>
</feature>
<feature type="binding site" evidence="1">
    <location>
        <position position="37"/>
    </location>
    <ligand>
        <name>Zn(2+)</name>
        <dbReference type="ChEBI" id="CHEBI:29105"/>
    </ligand>
</feature>
<feature type="binding site" evidence="1">
    <location>
        <position position="40"/>
    </location>
    <ligand>
        <name>Zn(2+)</name>
        <dbReference type="ChEBI" id="CHEBI:29105"/>
    </ligand>
</feature>
<accession>C3KAH5</accession>
<keyword id="KW-0479">Metal-binding</keyword>
<keyword id="KW-0687">Ribonucleoprotein</keyword>
<keyword id="KW-0689">Ribosomal protein</keyword>
<keyword id="KW-0694">RNA-binding</keyword>
<keyword id="KW-0699">rRNA-binding</keyword>
<keyword id="KW-0862">Zinc</keyword>
<protein>
    <recommendedName>
        <fullName evidence="1">Large ribosomal subunit protein bL31</fullName>
    </recommendedName>
    <alternativeName>
        <fullName evidence="2">50S ribosomal protein L31</fullName>
    </alternativeName>
</protein>
<gene>
    <name evidence="1" type="primary">rpmE</name>
    <name type="ordered locus">PFLU_0403</name>
</gene>
<evidence type="ECO:0000255" key="1">
    <source>
        <dbReference type="HAMAP-Rule" id="MF_00501"/>
    </source>
</evidence>
<evidence type="ECO:0000305" key="2"/>